<name>TR5OS_MOUSE</name>
<comment type="caution">
    <text evidence="2">Encoded in an intron of the TRPC5 gene (opposite strand). May be a non-coding RNA.</text>
</comment>
<keyword id="KW-1185">Reference proteome</keyword>
<proteinExistence type="predicted"/>
<accession>Q3UHV4</accession>
<reference key="1">
    <citation type="journal article" date="2005" name="Science">
        <title>The transcriptional landscape of the mammalian genome.</title>
        <authorList>
            <person name="Carninci P."/>
            <person name="Kasukawa T."/>
            <person name="Katayama S."/>
            <person name="Gough J."/>
            <person name="Frith M.C."/>
            <person name="Maeda N."/>
            <person name="Oyama R."/>
            <person name="Ravasi T."/>
            <person name="Lenhard B."/>
            <person name="Wells C."/>
            <person name="Kodzius R."/>
            <person name="Shimokawa K."/>
            <person name="Bajic V.B."/>
            <person name="Brenner S.E."/>
            <person name="Batalov S."/>
            <person name="Forrest A.R."/>
            <person name="Zavolan M."/>
            <person name="Davis M.J."/>
            <person name="Wilming L.G."/>
            <person name="Aidinis V."/>
            <person name="Allen J.E."/>
            <person name="Ambesi-Impiombato A."/>
            <person name="Apweiler R."/>
            <person name="Aturaliya R.N."/>
            <person name="Bailey T.L."/>
            <person name="Bansal M."/>
            <person name="Baxter L."/>
            <person name="Beisel K.W."/>
            <person name="Bersano T."/>
            <person name="Bono H."/>
            <person name="Chalk A.M."/>
            <person name="Chiu K.P."/>
            <person name="Choudhary V."/>
            <person name="Christoffels A."/>
            <person name="Clutterbuck D.R."/>
            <person name="Crowe M.L."/>
            <person name="Dalla E."/>
            <person name="Dalrymple B.P."/>
            <person name="de Bono B."/>
            <person name="Della Gatta G."/>
            <person name="di Bernardo D."/>
            <person name="Down T."/>
            <person name="Engstrom P."/>
            <person name="Fagiolini M."/>
            <person name="Faulkner G."/>
            <person name="Fletcher C.F."/>
            <person name="Fukushima T."/>
            <person name="Furuno M."/>
            <person name="Futaki S."/>
            <person name="Gariboldi M."/>
            <person name="Georgii-Hemming P."/>
            <person name="Gingeras T.R."/>
            <person name="Gojobori T."/>
            <person name="Green R.E."/>
            <person name="Gustincich S."/>
            <person name="Harbers M."/>
            <person name="Hayashi Y."/>
            <person name="Hensch T.K."/>
            <person name="Hirokawa N."/>
            <person name="Hill D."/>
            <person name="Huminiecki L."/>
            <person name="Iacono M."/>
            <person name="Ikeo K."/>
            <person name="Iwama A."/>
            <person name="Ishikawa T."/>
            <person name="Jakt M."/>
            <person name="Kanapin A."/>
            <person name="Katoh M."/>
            <person name="Kawasawa Y."/>
            <person name="Kelso J."/>
            <person name="Kitamura H."/>
            <person name="Kitano H."/>
            <person name="Kollias G."/>
            <person name="Krishnan S.P."/>
            <person name="Kruger A."/>
            <person name="Kummerfeld S.K."/>
            <person name="Kurochkin I.V."/>
            <person name="Lareau L.F."/>
            <person name="Lazarevic D."/>
            <person name="Lipovich L."/>
            <person name="Liu J."/>
            <person name="Liuni S."/>
            <person name="McWilliam S."/>
            <person name="Madan Babu M."/>
            <person name="Madera M."/>
            <person name="Marchionni L."/>
            <person name="Matsuda H."/>
            <person name="Matsuzawa S."/>
            <person name="Miki H."/>
            <person name="Mignone F."/>
            <person name="Miyake S."/>
            <person name="Morris K."/>
            <person name="Mottagui-Tabar S."/>
            <person name="Mulder N."/>
            <person name="Nakano N."/>
            <person name="Nakauchi H."/>
            <person name="Ng P."/>
            <person name="Nilsson R."/>
            <person name="Nishiguchi S."/>
            <person name="Nishikawa S."/>
            <person name="Nori F."/>
            <person name="Ohara O."/>
            <person name="Okazaki Y."/>
            <person name="Orlando V."/>
            <person name="Pang K.C."/>
            <person name="Pavan W.J."/>
            <person name="Pavesi G."/>
            <person name="Pesole G."/>
            <person name="Petrovsky N."/>
            <person name="Piazza S."/>
            <person name="Reed J."/>
            <person name="Reid J.F."/>
            <person name="Ring B.Z."/>
            <person name="Ringwald M."/>
            <person name="Rost B."/>
            <person name="Ruan Y."/>
            <person name="Salzberg S.L."/>
            <person name="Sandelin A."/>
            <person name="Schneider C."/>
            <person name="Schoenbach C."/>
            <person name="Sekiguchi K."/>
            <person name="Semple C.A."/>
            <person name="Seno S."/>
            <person name="Sessa L."/>
            <person name="Sheng Y."/>
            <person name="Shibata Y."/>
            <person name="Shimada H."/>
            <person name="Shimada K."/>
            <person name="Silva D."/>
            <person name="Sinclair B."/>
            <person name="Sperling S."/>
            <person name="Stupka E."/>
            <person name="Sugiura K."/>
            <person name="Sultana R."/>
            <person name="Takenaka Y."/>
            <person name="Taki K."/>
            <person name="Tammoja K."/>
            <person name="Tan S.L."/>
            <person name="Tang S."/>
            <person name="Taylor M.S."/>
            <person name="Tegner J."/>
            <person name="Teichmann S.A."/>
            <person name="Ueda H.R."/>
            <person name="van Nimwegen E."/>
            <person name="Verardo R."/>
            <person name="Wei C.L."/>
            <person name="Yagi K."/>
            <person name="Yamanishi H."/>
            <person name="Zabarovsky E."/>
            <person name="Zhu S."/>
            <person name="Zimmer A."/>
            <person name="Hide W."/>
            <person name="Bult C."/>
            <person name="Grimmond S.M."/>
            <person name="Teasdale R.D."/>
            <person name="Liu E.T."/>
            <person name="Brusic V."/>
            <person name="Quackenbush J."/>
            <person name="Wahlestedt C."/>
            <person name="Mattick J.S."/>
            <person name="Hume D.A."/>
            <person name="Kai C."/>
            <person name="Sasaki D."/>
            <person name="Tomaru Y."/>
            <person name="Fukuda S."/>
            <person name="Kanamori-Katayama M."/>
            <person name="Suzuki M."/>
            <person name="Aoki J."/>
            <person name="Arakawa T."/>
            <person name="Iida J."/>
            <person name="Imamura K."/>
            <person name="Itoh M."/>
            <person name="Kato T."/>
            <person name="Kawaji H."/>
            <person name="Kawagashira N."/>
            <person name="Kawashima T."/>
            <person name="Kojima M."/>
            <person name="Kondo S."/>
            <person name="Konno H."/>
            <person name="Nakano K."/>
            <person name="Ninomiya N."/>
            <person name="Nishio T."/>
            <person name="Okada M."/>
            <person name="Plessy C."/>
            <person name="Shibata K."/>
            <person name="Shiraki T."/>
            <person name="Suzuki S."/>
            <person name="Tagami M."/>
            <person name="Waki K."/>
            <person name="Watahiki A."/>
            <person name="Okamura-Oho Y."/>
            <person name="Suzuki H."/>
            <person name="Kawai J."/>
            <person name="Hayashizaki Y."/>
        </authorList>
    </citation>
    <scope>NUCLEOTIDE SEQUENCE [LARGE SCALE MRNA]</scope>
    <source>
        <strain>C57BL/6J</strain>
        <tissue>Amnion</tissue>
    </source>
</reference>
<evidence type="ECO:0000256" key="1">
    <source>
        <dbReference type="SAM" id="MobiDB-lite"/>
    </source>
</evidence>
<evidence type="ECO:0000305" key="2"/>
<sequence>MESVSIPVLVAGLIDCVAQLIRIAEDLLQFISQEQVPSVQQNARAEEAEAAAPPAEEDSLPDLADLSDLESILSVREDDDLILDTDETMIDINEIYKDILPAIKDDTESE</sequence>
<gene>
    <name type="primary">Trpc5os</name>
    <name type="synonym">Gm15070</name>
</gene>
<dbReference type="EMBL" id="AK147193">
    <property type="protein sequence ID" value="BAE27752.1"/>
    <property type="molecule type" value="mRNA"/>
</dbReference>
<dbReference type="CCDS" id="CCDS85811.1"/>
<dbReference type="RefSeq" id="NP_001182508.1">
    <property type="nucleotide sequence ID" value="NM_001195579.1"/>
</dbReference>
<dbReference type="RefSeq" id="XP_006528726.1">
    <property type="nucleotide sequence ID" value="XM_006528663.4"/>
</dbReference>
<dbReference type="RefSeq" id="XP_006528727.1">
    <property type="nucleotide sequence ID" value="XM_006528664.3"/>
</dbReference>
<dbReference type="RefSeq" id="XP_006528731.1">
    <property type="nucleotide sequence ID" value="XM_006528668.5"/>
</dbReference>
<dbReference type="STRING" id="10090.ENSMUSP00000148184"/>
<dbReference type="iPTMnet" id="Q3UHV4"/>
<dbReference type="PhosphoSitePlus" id="Q3UHV4"/>
<dbReference type="SwissPalm" id="Q3UHV4"/>
<dbReference type="ProteomicsDB" id="259181"/>
<dbReference type="Ensembl" id="ENSMUST00000155206.8">
    <property type="protein sequence ID" value="ENSMUSP00000148184.2"/>
    <property type="gene ID" value="ENSMUSG00000072934.11"/>
</dbReference>
<dbReference type="Ensembl" id="ENSMUST00000178233.2">
    <property type="protein sequence ID" value="ENSMUSP00000147698.2"/>
    <property type="gene ID" value="ENSMUSG00000072934.11"/>
</dbReference>
<dbReference type="GeneID" id="100503240"/>
<dbReference type="KEGG" id="mmu:100503240"/>
<dbReference type="UCSC" id="uc009umx.1">
    <property type="organism name" value="mouse"/>
</dbReference>
<dbReference type="AGR" id="MGI:3641805"/>
<dbReference type="CTD" id="100329135"/>
<dbReference type="MGI" id="MGI:3641805">
    <property type="gene designation" value="Trpc5os"/>
</dbReference>
<dbReference type="VEuPathDB" id="HostDB:ENSMUSG00000072934"/>
<dbReference type="GeneTree" id="ENSGT00390000018248"/>
<dbReference type="InParanoid" id="Q3UHV4"/>
<dbReference type="OMA" id="AREQMPC"/>
<dbReference type="OrthoDB" id="9836436at2759"/>
<dbReference type="PhylomeDB" id="Q3UHV4"/>
<dbReference type="BioGRID-ORCS" id="100503240">
    <property type="hits" value="0 hits in 10 CRISPR screens"/>
</dbReference>
<dbReference type="PRO" id="PR:Q3UHV4"/>
<dbReference type="Proteomes" id="UP000000589">
    <property type="component" value="Chromosome X"/>
</dbReference>
<dbReference type="RNAct" id="Q3UHV4">
    <property type="molecule type" value="protein"/>
</dbReference>
<dbReference type="Bgee" id="ENSMUSG00000072934">
    <property type="expression patterns" value="Expressed in mesodermal cell in embryo and 10 other cell types or tissues"/>
</dbReference>
<protein>
    <recommendedName>
        <fullName>Putative uncharacterized protein TRPC5OS homolog</fullName>
    </recommendedName>
</protein>
<organism>
    <name type="scientific">Mus musculus</name>
    <name type="common">Mouse</name>
    <dbReference type="NCBI Taxonomy" id="10090"/>
    <lineage>
        <taxon>Eukaryota</taxon>
        <taxon>Metazoa</taxon>
        <taxon>Chordata</taxon>
        <taxon>Craniata</taxon>
        <taxon>Vertebrata</taxon>
        <taxon>Euteleostomi</taxon>
        <taxon>Mammalia</taxon>
        <taxon>Eutheria</taxon>
        <taxon>Euarchontoglires</taxon>
        <taxon>Glires</taxon>
        <taxon>Rodentia</taxon>
        <taxon>Myomorpha</taxon>
        <taxon>Muroidea</taxon>
        <taxon>Muridae</taxon>
        <taxon>Murinae</taxon>
        <taxon>Mus</taxon>
        <taxon>Mus</taxon>
    </lineage>
</organism>
<feature type="chain" id="PRO_0000349179" description="Putative uncharacterized protein TRPC5OS homolog">
    <location>
        <begin position="1"/>
        <end position="110"/>
    </location>
</feature>
<feature type="region of interest" description="Disordered" evidence="1">
    <location>
        <begin position="38"/>
        <end position="62"/>
    </location>
</feature>